<name>MRAZ_LISW6</name>
<proteinExistence type="inferred from homology"/>
<evidence type="ECO:0000255" key="1">
    <source>
        <dbReference type="HAMAP-Rule" id="MF_01008"/>
    </source>
</evidence>
<evidence type="ECO:0000255" key="2">
    <source>
        <dbReference type="PROSITE-ProRule" id="PRU01076"/>
    </source>
</evidence>
<accession>A0AKE2</accession>
<reference key="1">
    <citation type="journal article" date="2006" name="J. Bacteriol.">
        <title>Whole-genome sequence of Listeria welshimeri reveals common steps in genome reduction with Listeria innocua as compared to Listeria monocytogenes.</title>
        <authorList>
            <person name="Hain T."/>
            <person name="Steinweg C."/>
            <person name="Kuenne C.T."/>
            <person name="Billion A."/>
            <person name="Ghai R."/>
            <person name="Chatterjee S.S."/>
            <person name="Domann E."/>
            <person name="Kaerst U."/>
            <person name="Goesmann A."/>
            <person name="Bekel T."/>
            <person name="Bartels D."/>
            <person name="Kaiser O."/>
            <person name="Meyer F."/>
            <person name="Puehler A."/>
            <person name="Weisshaar B."/>
            <person name="Wehland J."/>
            <person name="Liang C."/>
            <person name="Dandekar T."/>
            <person name="Lampidis R."/>
            <person name="Kreft J."/>
            <person name="Goebel W."/>
            <person name="Chakraborty T."/>
        </authorList>
    </citation>
    <scope>NUCLEOTIDE SEQUENCE [LARGE SCALE GENOMIC DNA]</scope>
    <source>
        <strain>ATCC 35897 / DSM 20650 / CCUG 15529 / CIP 8149 / NCTC 11857 / SLCC 5334 / V8</strain>
    </source>
</reference>
<comment type="subunit">
    <text evidence="1">Forms oligomers.</text>
</comment>
<comment type="subcellular location">
    <subcellularLocation>
        <location evidence="1">Cytoplasm</location>
        <location evidence="1">Nucleoid</location>
    </subcellularLocation>
</comment>
<comment type="similarity">
    <text evidence="1">Belongs to the MraZ family.</text>
</comment>
<protein>
    <recommendedName>
        <fullName>Transcriptional regulator MraZ</fullName>
    </recommendedName>
</protein>
<gene>
    <name evidence="1" type="primary">mraZ</name>
    <name type="ordered locus">lwe2056</name>
</gene>
<keyword id="KW-0963">Cytoplasm</keyword>
<keyword id="KW-0238">DNA-binding</keyword>
<keyword id="KW-0677">Repeat</keyword>
<keyword id="KW-0804">Transcription</keyword>
<keyword id="KW-0805">Transcription regulation</keyword>
<feature type="chain" id="PRO_1000062894" description="Transcriptional regulator MraZ">
    <location>
        <begin position="1"/>
        <end position="143"/>
    </location>
</feature>
<feature type="domain" description="SpoVT-AbrB 1" evidence="2">
    <location>
        <begin position="5"/>
        <end position="47"/>
    </location>
</feature>
<feature type="domain" description="SpoVT-AbrB 2" evidence="2">
    <location>
        <begin position="76"/>
        <end position="119"/>
    </location>
</feature>
<sequence>MFMGEYQHNIDIKGRLIVPAKFRELLGDNFVITRGLDKCLFAYPQEEWKKLEEKLQTLPLTKKDARSFTRFFFSGASECELDKQGRINIPSNLLQYADLEKETVIIGVSSRIEIWSKSEWDNVFNEAEESFADLAENMIGFDI</sequence>
<organism>
    <name type="scientific">Listeria welshimeri serovar 6b (strain ATCC 35897 / DSM 20650 / CCUG 15529 / CIP 8149 / NCTC 11857 / SLCC 5334 / V8)</name>
    <dbReference type="NCBI Taxonomy" id="386043"/>
    <lineage>
        <taxon>Bacteria</taxon>
        <taxon>Bacillati</taxon>
        <taxon>Bacillota</taxon>
        <taxon>Bacilli</taxon>
        <taxon>Bacillales</taxon>
        <taxon>Listeriaceae</taxon>
        <taxon>Listeria</taxon>
    </lineage>
</organism>
<dbReference type="EMBL" id="AM263198">
    <property type="protein sequence ID" value="CAK21474.1"/>
    <property type="molecule type" value="Genomic_DNA"/>
</dbReference>
<dbReference type="RefSeq" id="WP_003763280.1">
    <property type="nucleotide sequence ID" value="NC_008555.1"/>
</dbReference>
<dbReference type="SMR" id="A0AKE2"/>
<dbReference type="STRING" id="386043.lwe2056"/>
<dbReference type="GeneID" id="93235487"/>
<dbReference type="KEGG" id="lwe:lwe2056"/>
<dbReference type="eggNOG" id="COG2001">
    <property type="taxonomic scope" value="Bacteria"/>
</dbReference>
<dbReference type="HOGENOM" id="CLU_107907_0_5_9"/>
<dbReference type="OrthoDB" id="9807753at2"/>
<dbReference type="Proteomes" id="UP000000779">
    <property type="component" value="Chromosome"/>
</dbReference>
<dbReference type="GO" id="GO:0005737">
    <property type="term" value="C:cytoplasm"/>
    <property type="evidence" value="ECO:0007669"/>
    <property type="project" value="UniProtKB-UniRule"/>
</dbReference>
<dbReference type="GO" id="GO:0009295">
    <property type="term" value="C:nucleoid"/>
    <property type="evidence" value="ECO:0007669"/>
    <property type="project" value="UniProtKB-SubCell"/>
</dbReference>
<dbReference type="GO" id="GO:0003700">
    <property type="term" value="F:DNA-binding transcription factor activity"/>
    <property type="evidence" value="ECO:0007669"/>
    <property type="project" value="UniProtKB-UniRule"/>
</dbReference>
<dbReference type="GO" id="GO:0000976">
    <property type="term" value="F:transcription cis-regulatory region binding"/>
    <property type="evidence" value="ECO:0007669"/>
    <property type="project" value="TreeGrafter"/>
</dbReference>
<dbReference type="GO" id="GO:2000143">
    <property type="term" value="P:negative regulation of DNA-templated transcription initiation"/>
    <property type="evidence" value="ECO:0007669"/>
    <property type="project" value="TreeGrafter"/>
</dbReference>
<dbReference type="CDD" id="cd16321">
    <property type="entry name" value="MraZ_C"/>
    <property type="match status" value="1"/>
</dbReference>
<dbReference type="CDD" id="cd16320">
    <property type="entry name" value="MraZ_N"/>
    <property type="match status" value="1"/>
</dbReference>
<dbReference type="FunFam" id="3.40.1550.20:FF:000002">
    <property type="entry name" value="Transcriptional regulator MraZ"/>
    <property type="match status" value="1"/>
</dbReference>
<dbReference type="Gene3D" id="3.40.1550.20">
    <property type="entry name" value="Transcriptional regulator MraZ domain"/>
    <property type="match status" value="1"/>
</dbReference>
<dbReference type="HAMAP" id="MF_01008">
    <property type="entry name" value="MraZ"/>
    <property type="match status" value="1"/>
</dbReference>
<dbReference type="InterPro" id="IPR003444">
    <property type="entry name" value="MraZ"/>
</dbReference>
<dbReference type="InterPro" id="IPR035644">
    <property type="entry name" value="MraZ_C"/>
</dbReference>
<dbReference type="InterPro" id="IPR020603">
    <property type="entry name" value="MraZ_dom"/>
</dbReference>
<dbReference type="InterPro" id="IPR035642">
    <property type="entry name" value="MraZ_N"/>
</dbReference>
<dbReference type="InterPro" id="IPR038619">
    <property type="entry name" value="MraZ_sf"/>
</dbReference>
<dbReference type="InterPro" id="IPR007159">
    <property type="entry name" value="SpoVT-AbrB_dom"/>
</dbReference>
<dbReference type="InterPro" id="IPR037914">
    <property type="entry name" value="SpoVT-AbrB_sf"/>
</dbReference>
<dbReference type="NCBIfam" id="TIGR00242">
    <property type="entry name" value="division/cell wall cluster transcriptional repressor MraZ"/>
    <property type="match status" value="1"/>
</dbReference>
<dbReference type="PANTHER" id="PTHR34701">
    <property type="entry name" value="TRANSCRIPTIONAL REGULATOR MRAZ"/>
    <property type="match status" value="1"/>
</dbReference>
<dbReference type="PANTHER" id="PTHR34701:SF1">
    <property type="entry name" value="TRANSCRIPTIONAL REGULATOR MRAZ"/>
    <property type="match status" value="1"/>
</dbReference>
<dbReference type="Pfam" id="PF02381">
    <property type="entry name" value="MraZ"/>
    <property type="match status" value="2"/>
</dbReference>
<dbReference type="SUPFAM" id="SSF89447">
    <property type="entry name" value="AbrB/MazE/MraZ-like"/>
    <property type="match status" value="1"/>
</dbReference>
<dbReference type="PROSITE" id="PS51740">
    <property type="entry name" value="SPOVT_ABRB"/>
    <property type="match status" value="2"/>
</dbReference>